<protein>
    <recommendedName>
        <fullName evidence="1">UPF0353 protein Mjls_2492</fullName>
    </recommendedName>
</protein>
<reference key="1">
    <citation type="submission" date="2007-02" db="EMBL/GenBank/DDBJ databases">
        <title>Complete sequence of Mycobacterium sp. JLS.</title>
        <authorList>
            <consortium name="US DOE Joint Genome Institute"/>
            <person name="Copeland A."/>
            <person name="Lucas S."/>
            <person name="Lapidus A."/>
            <person name="Barry K."/>
            <person name="Detter J.C."/>
            <person name="Glavina del Rio T."/>
            <person name="Hammon N."/>
            <person name="Israni S."/>
            <person name="Dalin E."/>
            <person name="Tice H."/>
            <person name="Pitluck S."/>
            <person name="Chain P."/>
            <person name="Malfatti S."/>
            <person name="Shin M."/>
            <person name="Vergez L."/>
            <person name="Schmutz J."/>
            <person name="Larimer F."/>
            <person name="Land M."/>
            <person name="Hauser L."/>
            <person name="Kyrpides N."/>
            <person name="Mikhailova N."/>
            <person name="Miller C.D."/>
            <person name="Anderson A.J."/>
            <person name="Sims R.C."/>
            <person name="Richardson P."/>
        </authorList>
    </citation>
    <scope>NUCLEOTIDE SEQUENCE [LARGE SCALE GENOMIC DNA]</scope>
    <source>
        <strain>JLS</strain>
    </source>
</reference>
<keyword id="KW-1003">Cell membrane</keyword>
<keyword id="KW-0472">Membrane</keyword>
<keyword id="KW-0812">Transmembrane</keyword>
<keyword id="KW-1133">Transmembrane helix</keyword>
<sequence>MTLPLLGPMSFSGFEHPWFFLFLIVVLALAGLYVIVALARQRRILRFANMELLESVAPNRPNRWRHLPAILLVASLVLLTVAMAGPTRDVRVPRNRAVVMLVIDVSQSMRATDVSPSRLAAAQEASKQFADELTPGINLGLIAYAGTATVLVSPTTNREATKTAIDKLQLADRTATGEGIFTALQAIATVGAVIGGGDEPPPARIVLFSDGKETVPSNPDNPKGAFTAARTAKDQGVPISTISFGTPYGYVEINEQRQPVPVDDQMLKKIADLSEGEAFTASSLEQLREVYANLQQQIGYETIKGDASVGWLRLGALVLALSALAALLLNRRLPG</sequence>
<evidence type="ECO:0000255" key="1">
    <source>
        <dbReference type="HAMAP-Rule" id="MF_01340"/>
    </source>
</evidence>
<gene>
    <name type="ordered locus">Mjls_2492</name>
</gene>
<feature type="chain" id="PRO_1000067653" description="UPF0353 protein Mjls_2492">
    <location>
        <begin position="1"/>
        <end position="335"/>
    </location>
</feature>
<feature type="transmembrane region" description="Helical" evidence="1">
    <location>
        <begin position="18"/>
        <end position="38"/>
    </location>
</feature>
<feature type="transmembrane region" description="Helical" evidence="1">
    <location>
        <begin position="67"/>
        <end position="87"/>
    </location>
</feature>
<feature type="transmembrane region" description="Helical" evidence="1">
    <location>
        <begin position="309"/>
        <end position="329"/>
    </location>
</feature>
<feature type="domain" description="VWFA" evidence="1">
    <location>
        <begin position="98"/>
        <end position="294"/>
    </location>
</feature>
<accession>A3PZE9</accession>
<proteinExistence type="inferred from homology"/>
<name>Y2492_MYCSJ</name>
<comment type="subcellular location">
    <subcellularLocation>
        <location evidence="1">Cell membrane</location>
        <topology evidence="1">Multi-pass membrane protein</topology>
    </subcellularLocation>
</comment>
<comment type="similarity">
    <text evidence="1">Belongs to the UPF0353 family.</text>
</comment>
<dbReference type="EMBL" id="CP000580">
    <property type="protein sequence ID" value="ABN98276.1"/>
    <property type="molecule type" value="Genomic_DNA"/>
</dbReference>
<dbReference type="SMR" id="A3PZE9"/>
<dbReference type="KEGG" id="mjl:Mjls_2492"/>
<dbReference type="HOGENOM" id="CLU_024570_2_0_11"/>
<dbReference type="BioCyc" id="MSP164757:G1G8C-2511-MONOMER"/>
<dbReference type="GO" id="GO:0005886">
    <property type="term" value="C:plasma membrane"/>
    <property type="evidence" value="ECO:0007669"/>
    <property type="project" value="UniProtKB-SubCell"/>
</dbReference>
<dbReference type="Gene3D" id="3.40.50.410">
    <property type="entry name" value="von Willebrand factor, type A domain"/>
    <property type="match status" value="1"/>
</dbReference>
<dbReference type="HAMAP" id="MF_01340">
    <property type="entry name" value="UPF0353"/>
    <property type="match status" value="1"/>
</dbReference>
<dbReference type="InterPro" id="IPR024163">
    <property type="entry name" value="Aerotolerance_reg_N"/>
</dbReference>
<dbReference type="InterPro" id="IPR022933">
    <property type="entry name" value="UPF0353"/>
</dbReference>
<dbReference type="InterPro" id="IPR050768">
    <property type="entry name" value="UPF0353/GerABKA_families"/>
</dbReference>
<dbReference type="InterPro" id="IPR002035">
    <property type="entry name" value="VWF_A"/>
</dbReference>
<dbReference type="InterPro" id="IPR036465">
    <property type="entry name" value="vWFA_dom_sf"/>
</dbReference>
<dbReference type="NCBIfam" id="NF010238">
    <property type="entry name" value="PRK13685.1"/>
    <property type="match status" value="1"/>
</dbReference>
<dbReference type="PANTHER" id="PTHR22550:SF5">
    <property type="entry name" value="LEUCINE ZIPPER PROTEIN 4"/>
    <property type="match status" value="1"/>
</dbReference>
<dbReference type="PANTHER" id="PTHR22550">
    <property type="entry name" value="SPORE GERMINATION PROTEIN"/>
    <property type="match status" value="1"/>
</dbReference>
<dbReference type="Pfam" id="PF07584">
    <property type="entry name" value="BatA"/>
    <property type="match status" value="1"/>
</dbReference>
<dbReference type="Pfam" id="PF13519">
    <property type="entry name" value="VWA_2"/>
    <property type="match status" value="1"/>
</dbReference>
<dbReference type="SMART" id="SM00327">
    <property type="entry name" value="VWA"/>
    <property type="match status" value="1"/>
</dbReference>
<dbReference type="SUPFAM" id="SSF53300">
    <property type="entry name" value="vWA-like"/>
    <property type="match status" value="1"/>
</dbReference>
<dbReference type="PROSITE" id="PS50234">
    <property type="entry name" value="VWFA"/>
    <property type="match status" value="1"/>
</dbReference>
<organism>
    <name type="scientific">Mycobacterium sp. (strain JLS)</name>
    <dbReference type="NCBI Taxonomy" id="164757"/>
    <lineage>
        <taxon>Bacteria</taxon>
        <taxon>Bacillati</taxon>
        <taxon>Actinomycetota</taxon>
        <taxon>Actinomycetes</taxon>
        <taxon>Mycobacteriales</taxon>
        <taxon>Mycobacteriaceae</taxon>
        <taxon>Mycobacterium</taxon>
    </lineage>
</organism>